<comment type="catalytic activity">
    <reaction evidence="1">
        <text>tRNA(Cys) + L-cysteine + ATP = L-cysteinyl-tRNA(Cys) + AMP + diphosphate</text>
        <dbReference type="Rhea" id="RHEA:17773"/>
        <dbReference type="Rhea" id="RHEA-COMP:9661"/>
        <dbReference type="Rhea" id="RHEA-COMP:9679"/>
        <dbReference type="ChEBI" id="CHEBI:30616"/>
        <dbReference type="ChEBI" id="CHEBI:33019"/>
        <dbReference type="ChEBI" id="CHEBI:35235"/>
        <dbReference type="ChEBI" id="CHEBI:78442"/>
        <dbReference type="ChEBI" id="CHEBI:78517"/>
        <dbReference type="ChEBI" id="CHEBI:456215"/>
        <dbReference type="EC" id="6.1.1.16"/>
    </reaction>
</comment>
<comment type="cofactor">
    <cofactor evidence="1">
        <name>Zn(2+)</name>
        <dbReference type="ChEBI" id="CHEBI:29105"/>
    </cofactor>
    <text evidence="1">Binds 1 zinc ion per subunit.</text>
</comment>
<comment type="subunit">
    <text evidence="1">Monomer.</text>
</comment>
<comment type="subcellular location">
    <subcellularLocation>
        <location evidence="1">Cytoplasm</location>
    </subcellularLocation>
</comment>
<comment type="similarity">
    <text evidence="1">Belongs to the class-I aminoacyl-tRNA synthetase family.</text>
</comment>
<comment type="sequence caution" evidence="2">
    <conflict type="erroneous initiation">
        <sequence resource="EMBL-CDS" id="ABF02750"/>
    </conflict>
</comment>
<dbReference type="EC" id="6.1.1.16" evidence="1"/>
<dbReference type="EMBL" id="CP000266">
    <property type="protein sequence ID" value="ABF02750.1"/>
    <property type="status" value="ALT_INIT"/>
    <property type="molecule type" value="Genomic_DNA"/>
</dbReference>
<dbReference type="RefSeq" id="WP_000912345.1">
    <property type="nucleotide sequence ID" value="NC_008258.1"/>
</dbReference>
<dbReference type="SMR" id="Q0T776"/>
<dbReference type="GeneID" id="75204392"/>
<dbReference type="KEGG" id="sfv:SFV_0484"/>
<dbReference type="HOGENOM" id="CLU_013528_0_1_6"/>
<dbReference type="Proteomes" id="UP000000659">
    <property type="component" value="Chromosome"/>
</dbReference>
<dbReference type="GO" id="GO:0005829">
    <property type="term" value="C:cytosol"/>
    <property type="evidence" value="ECO:0007669"/>
    <property type="project" value="TreeGrafter"/>
</dbReference>
<dbReference type="GO" id="GO:0005524">
    <property type="term" value="F:ATP binding"/>
    <property type="evidence" value="ECO:0007669"/>
    <property type="project" value="UniProtKB-UniRule"/>
</dbReference>
<dbReference type="GO" id="GO:0004817">
    <property type="term" value="F:cysteine-tRNA ligase activity"/>
    <property type="evidence" value="ECO:0007669"/>
    <property type="project" value="UniProtKB-UniRule"/>
</dbReference>
<dbReference type="GO" id="GO:0008270">
    <property type="term" value="F:zinc ion binding"/>
    <property type="evidence" value="ECO:0007669"/>
    <property type="project" value="UniProtKB-UniRule"/>
</dbReference>
<dbReference type="GO" id="GO:0006423">
    <property type="term" value="P:cysteinyl-tRNA aminoacylation"/>
    <property type="evidence" value="ECO:0007669"/>
    <property type="project" value="UniProtKB-UniRule"/>
</dbReference>
<dbReference type="CDD" id="cd07963">
    <property type="entry name" value="Anticodon_Ia_Cys"/>
    <property type="match status" value="1"/>
</dbReference>
<dbReference type="CDD" id="cd00672">
    <property type="entry name" value="CysRS_core"/>
    <property type="match status" value="1"/>
</dbReference>
<dbReference type="FunFam" id="1.20.120.1910:FF:000001">
    <property type="entry name" value="Cysteine--tRNA ligase"/>
    <property type="match status" value="1"/>
</dbReference>
<dbReference type="FunFam" id="3.40.50.620:FF:000009">
    <property type="entry name" value="Cysteine--tRNA ligase"/>
    <property type="match status" value="1"/>
</dbReference>
<dbReference type="Gene3D" id="1.20.120.1910">
    <property type="entry name" value="Cysteine-tRNA ligase, C-terminal anti-codon recognition domain"/>
    <property type="match status" value="1"/>
</dbReference>
<dbReference type="Gene3D" id="3.40.50.620">
    <property type="entry name" value="HUPs"/>
    <property type="match status" value="1"/>
</dbReference>
<dbReference type="HAMAP" id="MF_00041">
    <property type="entry name" value="Cys_tRNA_synth"/>
    <property type="match status" value="1"/>
</dbReference>
<dbReference type="InterPro" id="IPR015803">
    <property type="entry name" value="Cys-tRNA-ligase"/>
</dbReference>
<dbReference type="InterPro" id="IPR015273">
    <property type="entry name" value="Cys-tRNA-synt_Ia_DALR"/>
</dbReference>
<dbReference type="InterPro" id="IPR024909">
    <property type="entry name" value="Cys-tRNA/MSH_ligase"/>
</dbReference>
<dbReference type="InterPro" id="IPR056411">
    <property type="entry name" value="CysS_C"/>
</dbReference>
<dbReference type="InterPro" id="IPR014729">
    <property type="entry name" value="Rossmann-like_a/b/a_fold"/>
</dbReference>
<dbReference type="InterPro" id="IPR032678">
    <property type="entry name" value="tRNA-synt_1_cat_dom"/>
</dbReference>
<dbReference type="InterPro" id="IPR009080">
    <property type="entry name" value="tRNAsynth_Ia_anticodon-bd"/>
</dbReference>
<dbReference type="NCBIfam" id="TIGR00435">
    <property type="entry name" value="cysS"/>
    <property type="match status" value="1"/>
</dbReference>
<dbReference type="PANTHER" id="PTHR10890:SF3">
    <property type="entry name" value="CYSTEINE--TRNA LIGASE, CYTOPLASMIC"/>
    <property type="match status" value="1"/>
</dbReference>
<dbReference type="PANTHER" id="PTHR10890">
    <property type="entry name" value="CYSTEINYL-TRNA SYNTHETASE"/>
    <property type="match status" value="1"/>
</dbReference>
<dbReference type="Pfam" id="PF23493">
    <property type="entry name" value="CysS_C"/>
    <property type="match status" value="1"/>
</dbReference>
<dbReference type="Pfam" id="PF09190">
    <property type="entry name" value="DALR_2"/>
    <property type="match status" value="1"/>
</dbReference>
<dbReference type="Pfam" id="PF01406">
    <property type="entry name" value="tRNA-synt_1e"/>
    <property type="match status" value="1"/>
</dbReference>
<dbReference type="PRINTS" id="PR00983">
    <property type="entry name" value="TRNASYNTHCYS"/>
</dbReference>
<dbReference type="SMART" id="SM00840">
    <property type="entry name" value="DALR_2"/>
    <property type="match status" value="1"/>
</dbReference>
<dbReference type="SUPFAM" id="SSF47323">
    <property type="entry name" value="Anticodon-binding domain of a subclass of class I aminoacyl-tRNA synthetases"/>
    <property type="match status" value="1"/>
</dbReference>
<dbReference type="SUPFAM" id="SSF52374">
    <property type="entry name" value="Nucleotidylyl transferase"/>
    <property type="match status" value="1"/>
</dbReference>
<keyword id="KW-0030">Aminoacyl-tRNA synthetase</keyword>
<keyword id="KW-0067">ATP-binding</keyword>
<keyword id="KW-0963">Cytoplasm</keyword>
<keyword id="KW-0436">Ligase</keyword>
<keyword id="KW-0479">Metal-binding</keyword>
<keyword id="KW-0547">Nucleotide-binding</keyword>
<keyword id="KW-0648">Protein biosynthesis</keyword>
<keyword id="KW-0862">Zinc</keyword>
<reference key="1">
    <citation type="journal article" date="2006" name="BMC Genomics">
        <title>Complete genome sequence of Shigella flexneri 5b and comparison with Shigella flexneri 2a.</title>
        <authorList>
            <person name="Nie H."/>
            <person name="Yang F."/>
            <person name="Zhang X."/>
            <person name="Yang J."/>
            <person name="Chen L."/>
            <person name="Wang J."/>
            <person name="Xiong Z."/>
            <person name="Peng J."/>
            <person name="Sun L."/>
            <person name="Dong J."/>
            <person name="Xue Y."/>
            <person name="Xu X."/>
            <person name="Chen S."/>
            <person name="Yao Z."/>
            <person name="Shen Y."/>
            <person name="Jin Q."/>
        </authorList>
    </citation>
    <scope>NUCLEOTIDE SEQUENCE [LARGE SCALE GENOMIC DNA]</scope>
    <source>
        <strain>8401</strain>
    </source>
</reference>
<proteinExistence type="inferred from homology"/>
<gene>
    <name evidence="1" type="primary">cysS</name>
    <name type="ordered locus">SFV_0484</name>
</gene>
<evidence type="ECO:0000255" key="1">
    <source>
        <dbReference type="HAMAP-Rule" id="MF_00041"/>
    </source>
</evidence>
<evidence type="ECO:0000305" key="2"/>
<organism>
    <name type="scientific">Shigella flexneri serotype 5b (strain 8401)</name>
    <dbReference type="NCBI Taxonomy" id="373384"/>
    <lineage>
        <taxon>Bacteria</taxon>
        <taxon>Pseudomonadati</taxon>
        <taxon>Pseudomonadota</taxon>
        <taxon>Gammaproteobacteria</taxon>
        <taxon>Enterobacterales</taxon>
        <taxon>Enterobacteriaceae</taxon>
        <taxon>Shigella</taxon>
    </lineage>
</organism>
<accession>Q0T776</accession>
<name>SYC_SHIF8</name>
<protein>
    <recommendedName>
        <fullName evidence="1">Cysteine--tRNA ligase</fullName>
        <ecNumber evidence="1">6.1.1.16</ecNumber>
    </recommendedName>
    <alternativeName>
        <fullName evidence="1">Cysteinyl-tRNA synthetase</fullName>
        <shortName evidence="1">CysRS</shortName>
    </alternativeName>
</protein>
<sequence>MLKIFNTLTRQKEEFKPIHAGEVGMYVCGITVYDLCHIGHGRTFVAFDVVARYLRFLGYKLKYVRNITDIDDKIIKRANENGESFVALVDRMIAEMHKDFDALNILRPDMEPRATHHIAEIIELTEQLIAKGHAYVADNGDVMFDVPTDPTYGVLSRQDLDQLQAGARVDVVDDKRNPMDFVLWKMSKEGEPSWPSPWGAGRPGWHIECSAMNCKQLGNHFDIHGGGSDLMFPHHENEIAQSTCAHDGQYVNYWMHSGMVMVDREKMSKSLGNFFTVRDVLKYYDAETVRYFLMSGHYRSQLNYSEENLKQARAALERLYTALRGTDKTVAPAGGEAFEARFIEAMDDDFNTPEAYSVLFDMAREVNRLKAEDMAAANAMASHLRKLSAVLGLLEQEPEAFLQSGAQADDSEVAEIEALIQQRLDARKAKDWAAADAARDRLNEMGIVLEDGPQGTTWRRK</sequence>
<feature type="chain" id="PRO_0000332906" description="Cysteine--tRNA ligase">
    <location>
        <begin position="1"/>
        <end position="461"/>
    </location>
</feature>
<feature type="short sequence motif" description="'HIGH' region">
    <location>
        <begin position="30"/>
        <end position="40"/>
    </location>
</feature>
<feature type="short sequence motif" description="'KMSKS' region">
    <location>
        <begin position="266"/>
        <end position="270"/>
    </location>
</feature>
<feature type="binding site" evidence="1">
    <location>
        <position position="28"/>
    </location>
    <ligand>
        <name>Zn(2+)</name>
        <dbReference type="ChEBI" id="CHEBI:29105"/>
    </ligand>
</feature>
<feature type="binding site" evidence="1">
    <location>
        <position position="209"/>
    </location>
    <ligand>
        <name>Zn(2+)</name>
        <dbReference type="ChEBI" id="CHEBI:29105"/>
    </ligand>
</feature>
<feature type="binding site" evidence="1">
    <location>
        <position position="234"/>
    </location>
    <ligand>
        <name>Zn(2+)</name>
        <dbReference type="ChEBI" id="CHEBI:29105"/>
    </ligand>
</feature>
<feature type="binding site" evidence="1">
    <location>
        <position position="238"/>
    </location>
    <ligand>
        <name>Zn(2+)</name>
        <dbReference type="ChEBI" id="CHEBI:29105"/>
    </ligand>
</feature>
<feature type="binding site" evidence="1">
    <location>
        <position position="269"/>
    </location>
    <ligand>
        <name>ATP</name>
        <dbReference type="ChEBI" id="CHEBI:30616"/>
    </ligand>
</feature>